<sequence length="84" mass="9722">MTDKIRTLQGRVVSDKMEKSIVVAIERFVKHPIYGKFIKRTTKMHVHDENNECGIGDVVEIRECRPLSKTKSWTLVRVVEKAVL</sequence>
<feature type="initiator methionine" description="Removed" evidence="1">
    <location>
        <position position="1"/>
    </location>
</feature>
<feature type="chain" id="PRO_0000128475" description="Small ribosomal subunit protein uS17">
    <location>
        <begin position="2"/>
        <end position="84"/>
    </location>
</feature>
<gene>
    <name evidence="2" type="primary">rpsQ</name>
    <name type="ordered locus">STM3431</name>
</gene>
<name>RS17_SALTY</name>
<keyword id="KW-1185">Reference proteome</keyword>
<keyword id="KW-0687">Ribonucleoprotein</keyword>
<keyword id="KW-0689">Ribosomal protein</keyword>
<keyword id="KW-0694">RNA-binding</keyword>
<keyword id="KW-0699">rRNA-binding</keyword>
<reference key="1">
    <citation type="journal article" date="2001" name="Nature">
        <title>Complete genome sequence of Salmonella enterica serovar Typhimurium LT2.</title>
        <authorList>
            <person name="McClelland M."/>
            <person name="Sanderson K.E."/>
            <person name="Spieth J."/>
            <person name="Clifton S.W."/>
            <person name="Latreille P."/>
            <person name="Courtney L."/>
            <person name="Porwollik S."/>
            <person name="Ali J."/>
            <person name="Dante M."/>
            <person name="Du F."/>
            <person name="Hou S."/>
            <person name="Layman D."/>
            <person name="Leonard S."/>
            <person name="Nguyen C."/>
            <person name="Scott K."/>
            <person name="Holmes A."/>
            <person name="Grewal N."/>
            <person name="Mulvaney E."/>
            <person name="Ryan E."/>
            <person name="Sun H."/>
            <person name="Florea L."/>
            <person name="Miller W."/>
            <person name="Stoneking T."/>
            <person name="Nhan M."/>
            <person name="Waterston R."/>
            <person name="Wilson R.K."/>
        </authorList>
    </citation>
    <scope>NUCLEOTIDE SEQUENCE [LARGE SCALE GENOMIC DNA]</scope>
    <source>
        <strain>LT2 / SGSC1412 / ATCC 700720</strain>
    </source>
</reference>
<evidence type="ECO:0000250" key="1"/>
<evidence type="ECO:0000255" key="2">
    <source>
        <dbReference type="HAMAP-Rule" id="MF_01345"/>
    </source>
</evidence>
<evidence type="ECO:0000305" key="3"/>
<protein>
    <recommendedName>
        <fullName evidence="2">Small ribosomal subunit protein uS17</fullName>
    </recommendedName>
    <alternativeName>
        <fullName evidence="3">30S ribosomal protein S17</fullName>
    </alternativeName>
</protein>
<comment type="function">
    <text evidence="2">One of the primary rRNA binding proteins, it binds specifically to the 5'-end of 16S ribosomal RNA.</text>
</comment>
<comment type="subunit">
    <text evidence="2">Part of the 30S ribosomal subunit.</text>
</comment>
<comment type="similarity">
    <text evidence="2">Belongs to the universal ribosomal protein uS17 family.</text>
</comment>
<organism>
    <name type="scientific">Salmonella typhimurium (strain LT2 / SGSC1412 / ATCC 700720)</name>
    <dbReference type="NCBI Taxonomy" id="99287"/>
    <lineage>
        <taxon>Bacteria</taxon>
        <taxon>Pseudomonadati</taxon>
        <taxon>Pseudomonadota</taxon>
        <taxon>Gammaproteobacteria</taxon>
        <taxon>Enterobacterales</taxon>
        <taxon>Enterobacteriaceae</taxon>
        <taxon>Salmonella</taxon>
    </lineage>
</organism>
<accession>P66451</accession>
<accession>Q8XEL0</accession>
<proteinExistence type="inferred from homology"/>
<dbReference type="EMBL" id="AE006468">
    <property type="protein sequence ID" value="AAL22294.1"/>
    <property type="molecule type" value="Genomic_DNA"/>
</dbReference>
<dbReference type="RefSeq" id="NP_462335.1">
    <property type="nucleotide sequence ID" value="NC_003197.2"/>
</dbReference>
<dbReference type="RefSeq" id="WP_000130101.1">
    <property type="nucleotide sequence ID" value="NC_003197.2"/>
</dbReference>
<dbReference type="SMR" id="P66451"/>
<dbReference type="STRING" id="99287.STM3431"/>
<dbReference type="PaxDb" id="99287-STM3431"/>
<dbReference type="GeneID" id="1254954"/>
<dbReference type="GeneID" id="66757766"/>
<dbReference type="KEGG" id="stm:STM3431"/>
<dbReference type="PATRIC" id="fig|99287.12.peg.3628"/>
<dbReference type="HOGENOM" id="CLU_073626_1_1_6"/>
<dbReference type="OMA" id="HPMYGKF"/>
<dbReference type="PhylomeDB" id="P66451"/>
<dbReference type="BioCyc" id="SENT99287:STM3431-MONOMER"/>
<dbReference type="Proteomes" id="UP000001014">
    <property type="component" value="Chromosome"/>
</dbReference>
<dbReference type="GO" id="GO:0022627">
    <property type="term" value="C:cytosolic small ribosomal subunit"/>
    <property type="evidence" value="ECO:0000318"/>
    <property type="project" value="GO_Central"/>
</dbReference>
<dbReference type="GO" id="GO:0019843">
    <property type="term" value="F:rRNA binding"/>
    <property type="evidence" value="ECO:0007669"/>
    <property type="project" value="UniProtKB-UniRule"/>
</dbReference>
<dbReference type="GO" id="GO:0003735">
    <property type="term" value="F:structural constituent of ribosome"/>
    <property type="evidence" value="ECO:0000318"/>
    <property type="project" value="GO_Central"/>
</dbReference>
<dbReference type="GO" id="GO:0006412">
    <property type="term" value="P:translation"/>
    <property type="evidence" value="ECO:0007669"/>
    <property type="project" value="UniProtKB-UniRule"/>
</dbReference>
<dbReference type="CDD" id="cd00364">
    <property type="entry name" value="Ribosomal_uS17"/>
    <property type="match status" value="1"/>
</dbReference>
<dbReference type="FunFam" id="2.40.50.140:FF:000014">
    <property type="entry name" value="30S ribosomal protein S17"/>
    <property type="match status" value="1"/>
</dbReference>
<dbReference type="Gene3D" id="2.40.50.140">
    <property type="entry name" value="Nucleic acid-binding proteins"/>
    <property type="match status" value="1"/>
</dbReference>
<dbReference type="HAMAP" id="MF_01345_B">
    <property type="entry name" value="Ribosomal_uS17_B"/>
    <property type="match status" value="1"/>
</dbReference>
<dbReference type="InterPro" id="IPR012340">
    <property type="entry name" value="NA-bd_OB-fold"/>
</dbReference>
<dbReference type="InterPro" id="IPR000266">
    <property type="entry name" value="Ribosomal_uS17"/>
</dbReference>
<dbReference type="InterPro" id="IPR019984">
    <property type="entry name" value="Ribosomal_uS17_bact/chlr"/>
</dbReference>
<dbReference type="InterPro" id="IPR019979">
    <property type="entry name" value="Ribosomal_uS17_CS"/>
</dbReference>
<dbReference type="NCBIfam" id="NF004123">
    <property type="entry name" value="PRK05610.1"/>
    <property type="match status" value="1"/>
</dbReference>
<dbReference type="NCBIfam" id="TIGR03635">
    <property type="entry name" value="uS17_bact"/>
    <property type="match status" value="1"/>
</dbReference>
<dbReference type="PANTHER" id="PTHR10744">
    <property type="entry name" value="40S RIBOSOMAL PROTEIN S11 FAMILY MEMBER"/>
    <property type="match status" value="1"/>
</dbReference>
<dbReference type="PANTHER" id="PTHR10744:SF1">
    <property type="entry name" value="SMALL RIBOSOMAL SUBUNIT PROTEIN US17M"/>
    <property type="match status" value="1"/>
</dbReference>
<dbReference type="Pfam" id="PF00366">
    <property type="entry name" value="Ribosomal_S17"/>
    <property type="match status" value="1"/>
</dbReference>
<dbReference type="PRINTS" id="PR00973">
    <property type="entry name" value="RIBOSOMALS17"/>
</dbReference>
<dbReference type="SUPFAM" id="SSF50249">
    <property type="entry name" value="Nucleic acid-binding proteins"/>
    <property type="match status" value="1"/>
</dbReference>
<dbReference type="PROSITE" id="PS00056">
    <property type="entry name" value="RIBOSOMAL_S17"/>
    <property type="match status" value="1"/>
</dbReference>